<organism>
    <name type="scientific">Nocardioides sp. (strain ATCC BAA-499 / JS614)</name>
    <dbReference type="NCBI Taxonomy" id="196162"/>
    <lineage>
        <taxon>Bacteria</taxon>
        <taxon>Bacillati</taxon>
        <taxon>Actinomycetota</taxon>
        <taxon>Actinomycetes</taxon>
        <taxon>Propionibacteriales</taxon>
        <taxon>Nocardioidaceae</taxon>
        <taxon>Nocardioides</taxon>
    </lineage>
</organism>
<gene>
    <name evidence="1" type="primary">arc</name>
    <name type="ordered locus">Noca_2639</name>
</gene>
<name>ARC_NOCSJ</name>
<sequence>MSTSDGVPSTGGRSPEELASQVRLLEDEVSDLRRRLTESPGGSRGLELRLADAQRSLAGVTSQNERLAQTLREARDQIMKLKEEVDRLAQPPAGFGTFLARNDDDSIDVFTGGRKLRVNVSPSVDLDTLQRGQEVMLNEALNVVAALEFEEVGEVVMFKELLADGDRALVIANADEERVVRLAEPLRGDTIRAGDSLLLDSRAGYVYEKVPKSEVEELVLEEVPDIAYESIGGLAGQIEQIRDAVELPYLHPELFKEHQLKPPKGVLLYGPPGCGKTLIAKAVANSLAKKVAAKTGQEGKSYFLNIKGPELLNKYVGETERHIRLVFQRAREKASGGTPVIVFFDEMDSLFRTRGSGVSSDVENTIVPQLLSEIDGVEALENVLVIGASNREDMIDPAILRPGRLDVKIKIERPDAESARDIFSKYLTTTLPLHADDLSEFGGDRDACVGGMIRATVERMYTETEENRFLEVTYANGDKEVLYFKDFNSGAMIQNIVDRAKKMAIKDFLDHDQHGLRVSHLLQACVDEFKENEDLPNTTNPDDWARISGKKGERIVFIRTLITGKQGTEPGRSIDTVANTGQYL</sequence>
<keyword id="KW-0067">ATP-binding</keyword>
<keyword id="KW-0143">Chaperone</keyword>
<keyword id="KW-0175">Coiled coil</keyword>
<keyword id="KW-0547">Nucleotide-binding</keyword>
<keyword id="KW-0647">Proteasome</keyword>
<keyword id="KW-1185">Reference proteome</keyword>
<comment type="function">
    <text evidence="1">ATPase which is responsible for recognizing, binding, unfolding and translocation of pupylated proteins into the bacterial 20S proteasome core particle. May be essential for opening the gate of the 20S proteasome via an interaction with its C-terminus, thereby allowing substrate entry and access to the site of proteolysis. Thus, the C-termini of the proteasomal ATPase may function like a 'key in a lock' to induce gate opening and therefore regulate proteolysis.</text>
</comment>
<comment type="pathway">
    <text evidence="1">Protein degradation; proteasomal Pup-dependent pathway.</text>
</comment>
<comment type="subunit">
    <text evidence="1">Homohexamer. Assembles into a hexameric ring structure that caps the 20S proteasome core. Strongly interacts with the prokaryotic ubiquitin-like protein Pup through a hydrophobic interface; the interacting region of ARC lies in its N-terminal coiled-coil domain. There is one Pup binding site per ARC hexamer ring. Upon ATP-binding, the C-terminus of ARC interacts with the alpha-rings of the proteasome core, possibly by binding to the intersubunit pockets.</text>
</comment>
<comment type="domain">
    <text evidence="1">Consists of three main regions, an N-terminal coiled-coil domain that binds to protein Pup and functions as a docking station, an interdomain involved in ARC hexamerization, and a C-terminal ATPase domain of the AAA type.</text>
</comment>
<comment type="similarity">
    <text evidence="1">Belongs to the AAA ATPase family.</text>
</comment>
<reference key="1">
    <citation type="submission" date="2006-12" db="EMBL/GenBank/DDBJ databases">
        <title>Complete sequence of chromosome 1 of Nocardioides sp. JS614.</title>
        <authorList>
            <person name="Copeland A."/>
            <person name="Lucas S."/>
            <person name="Lapidus A."/>
            <person name="Barry K."/>
            <person name="Detter J.C."/>
            <person name="Glavina del Rio T."/>
            <person name="Hammon N."/>
            <person name="Israni S."/>
            <person name="Dalin E."/>
            <person name="Tice H."/>
            <person name="Pitluck S."/>
            <person name="Thompson L.S."/>
            <person name="Brettin T."/>
            <person name="Bruce D."/>
            <person name="Han C."/>
            <person name="Tapia R."/>
            <person name="Schmutz J."/>
            <person name="Larimer F."/>
            <person name="Land M."/>
            <person name="Hauser L."/>
            <person name="Kyrpides N."/>
            <person name="Kim E."/>
            <person name="Mattes T."/>
            <person name="Gossett J."/>
            <person name="Richardson P."/>
        </authorList>
    </citation>
    <scope>NUCLEOTIDE SEQUENCE [LARGE SCALE GENOMIC DNA]</scope>
    <source>
        <strain>ATCC BAA-499 / JS614</strain>
    </source>
</reference>
<accession>A1SK07</accession>
<proteinExistence type="inferred from homology"/>
<evidence type="ECO:0000255" key="1">
    <source>
        <dbReference type="HAMAP-Rule" id="MF_02112"/>
    </source>
</evidence>
<protein>
    <recommendedName>
        <fullName evidence="1">Proteasome-associated ATPase</fullName>
    </recommendedName>
    <alternativeName>
        <fullName evidence="1">AAA ATPase forming ring-shaped complexes</fullName>
        <shortName evidence="1">ARC</shortName>
    </alternativeName>
    <alternativeName>
        <fullName evidence="1">Proteasomal ATPase</fullName>
    </alternativeName>
</protein>
<feature type="chain" id="PRO_0000397010" description="Proteasome-associated ATPase">
    <location>
        <begin position="1"/>
        <end position="584"/>
    </location>
</feature>
<feature type="region of interest" description="Docks into pockets in the proteasome alpha-ring" evidence="1">
    <location>
        <begin position="583"/>
        <end position="584"/>
    </location>
</feature>
<feature type="coiled-coil region" evidence="1">
    <location>
        <begin position="16"/>
        <end position="91"/>
    </location>
</feature>
<feature type="binding site" evidence="1">
    <location>
        <begin position="273"/>
        <end position="278"/>
    </location>
    <ligand>
        <name>ATP</name>
        <dbReference type="ChEBI" id="CHEBI:30616"/>
    </ligand>
</feature>
<dbReference type="EMBL" id="CP000509">
    <property type="protein sequence ID" value="ABL82142.1"/>
    <property type="molecule type" value="Genomic_DNA"/>
</dbReference>
<dbReference type="RefSeq" id="WP_011756082.1">
    <property type="nucleotide sequence ID" value="NC_008699.1"/>
</dbReference>
<dbReference type="SMR" id="A1SK07"/>
<dbReference type="STRING" id="196162.Noca_2639"/>
<dbReference type="KEGG" id="nca:Noca_2639"/>
<dbReference type="eggNOG" id="COG1222">
    <property type="taxonomic scope" value="Bacteria"/>
</dbReference>
<dbReference type="HOGENOM" id="CLU_036054_0_0_11"/>
<dbReference type="OrthoDB" id="9809379at2"/>
<dbReference type="UniPathway" id="UPA00997"/>
<dbReference type="Proteomes" id="UP000000640">
    <property type="component" value="Chromosome"/>
</dbReference>
<dbReference type="GO" id="GO:0000502">
    <property type="term" value="C:proteasome complex"/>
    <property type="evidence" value="ECO:0007669"/>
    <property type="project" value="UniProtKB-KW"/>
</dbReference>
<dbReference type="GO" id="GO:0005524">
    <property type="term" value="F:ATP binding"/>
    <property type="evidence" value="ECO:0007669"/>
    <property type="project" value="UniProtKB-UniRule"/>
</dbReference>
<dbReference type="GO" id="GO:0016887">
    <property type="term" value="F:ATP hydrolysis activity"/>
    <property type="evidence" value="ECO:0007669"/>
    <property type="project" value="UniProtKB-UniRule"/>
</dbReference>
<dbReference type="GO" id="GO:0019941">
    <property type="term" value="P:modification-dependent protein catabolic process"/>
    <property type="evidence" value="ECO:0007669"/>
    <property type="project" value="InterPro"/>
</dbReference>
<dbReference type="GO" id="GO:0010498">
    <property type="term" value="P:proteasomal protein catabolic process"/>
    <property type="evidence" value="ECO:0007669"/>
    <property type="project" value="InterPro"/>
</dbReference>
<dbReference type="FunFam" id="3.40.50.300:FF:000155">
    <property type="entry name" value="AAA ATPase forming ring-shaped complexes"/>
    <property type="match status" value="1"/>
</dbReference>
<dbReference type="Gene3D" id="1.10.8.60">
    <property type="match status" value="1"/>
</dbReference>
<dbReference type="Gene3D" id="1.20.5.170">
    <property type="match status" value="1"/>
</dbReference>
<dbReference type="Gene3D" id="2.40.50.140">
    <property type="entry name" value="Nucleic acid-binding proteins"/>
    <property type="match status" value="2"/>
</dbReference>
<dbReference type="Gene3D" id="3.40.50.300">
    <property type="entry name" value="P-loop containing nucleotide triphosphate hydrolases"/>
    <property type="match status" value="1"/>
</dbReference>
<dbReference type="HAMAP" id="MF_02112">
    <property type="entry name" value="ARC_ATPase"/>
    <property type="match status" value="1"/>
</dbReference>
<dbReference type="InterPro" id="IPR003593">
    <property type="entry name" value="AAA+_ATPase"/>
</dbReference>
<dbReference type="InterPro" id="IPR050168">
    <property type="entry name" value="AAA_ATPase_domain"/>
</dbReference>
<dbReference type="InterPro" id="IPR003959">
    <property type="entry name" value="ATPase_AAA_core"/>
</dbReference>
<dbReference type="InterPro" id="IPR003960">
    <property type="entry name" value="ATPase_AAA_CS"/>
</dbReference>
<dbReference type="InterPro" id="IPR012340">
    <property type="entry name" value="NA-bd_OB-fold"/>
</dbReference>
<dbReference type="InterPro" id="IPR027417">
    <property type="entry name" value="P-loop_NTPase"/>
</dbReference>
<dbReference type="InterPro" id="IPR032501">
    <property type="entry name" value="Prot_ATP_ID_OB_2nd"/>
</dbReference>
<dbReference type="InterPro" id="IPR041626">
    <property type="entry name" value="Prot_ATP_ID_OB_N"/>
</dbReference>
<dbReference type="InterPro" id="IPR022482">
    <property type="entry name" value="Proteasome_ATPase"/>
</dbReference>
<dbReference type="NCBIfam" id="TIGR03689">
    <property type="entry name" value="pup_AAA"/>
    <property type="match status" value="1"/>
</dbReference>
<dbReference type="PANTHER" id="PTHR23077">
    <property type="entry name" value="AAA-FAMILY ATPASE"/>
    <property type="match status" value="1"/>
</dbReference>
<dbReference type="PANTHER" id="PTHR23077:SF144">
    <property type="entry name" value="PROTEASOME-ASSOCIATED ATPASE"/>
    <property type="match status" value="1"/>
</dbReference>
<dbReference type="Pfam" id="PF00004">
    <property type="entry name" value="AAA"/>
    <property type="match status" value="1"/>
</dbReference>
<dbReference type="Pfam" id="PF16450">
    <property type="entry name" value="Prot_ATP_ID_OB_C"/>
    <property type="match status" value="1"/>
</dbReference>
<dbReference type="Pfam" id="PF17758">
    <property type="entry name" value="Prot_ATP_ID_OB_N"/>
    <property type="match status" value="1"/>
</dbReference>
<dbReference type="SMART" id="SM00382">
    <property type="entry name" value="AAA"/>
    <property type="match status" value="1"/>
</dbReference>
<dbReference type="SUPFAM" id="SSF52540">
    <property type="entry name" value="P-loop containing nucleoside triphosphate hydrolases"/>
    <property type="match status" value="1"/>
</dbReference>
<dbReference type="PROSITE" id="PS00674">
    <property type="entry name" value="AAA"/>
    <property type="match status" value="1"/>
</dbReference>